<reference key="1">
    <citation type="journal article" date="2002" name="Nature">
        <title>The genome sequence of Schizosaccharomyces pombe.</title>
        <authorList>
            <person name="Wood V."/>
            <person name="Gwilliam R."/>
            <person name="Rajandream M.A."/>
            <person name="Lyne M.H."/>
            <person name="Lyne R."/>
            <person name="Stewart A."/>
            <person name="Sgouros J.G."/>
            <person name="Peat N."/>
            <person name="Hayles J."/>
            <person name="Baker S.G."/>
            <person name="Basham D."/>
            <person name="Bowman S."/>
            <person name="Brooks K."/>
            <person name="Brown D."/>
            <person name="Brown S."/>
            <person name="Chillingworth T."/>
            <person name="Churcher C.M."/>
            <person name="Collins M."/>
            <person name="Connor R."/>
            <person name="Cronin A."/>
            <person name="Davis P."/>
            <person name="Feltwell T."/>
            <person name="Fraser A."/>
            <person name="Gentles S."/>
            <person name="Goble A."/>
            <person name="Hamlin N."/>
            <person name="Harris D.E."/>
            <person name="Hidalgo J."/>
            <person name="Hodgson G."/>
            <person name="Holroyd S."/>
            <person name="Hornsby T."/>
            <person name="Howarth S."/>
            <person name="Huckle E.J."/>
            <person name="Hunt S."/>
            <person name="Jagels K."/>
            <person name="James K.D."/>
            <person name="Jones L."/>
            <person name="Jones M."/>
            <person name="Leather S."/>
            <person name="McDonald S."/>
            <person name="McLean J."/>
            <person name="Mooney P."/>
            <person name="Moule S."/>
            <person name="Mungall K.L."/>
            <person name="Murphy L.D."/>
            <person name="Niblett D."/>
            <person name="Odell C."/>
            <person name="Oliver K."/>
            <person name="O'Neil S."/>
            <person name="Pearson D."/>
            <person name="Quail M.A."/>
            <person name="Rabbinowitsch E."/>
            <person name="Rutherford K.M."/>
            <person name="Rutter S."/>
            <person name="Saunders D."/>
            <person name="Seeger K."/>
            <person name="Sharp S."/>
            <person name="Skelton J."/>
            <person name="Simmonds M.N."/>
            <person name="Squares R."/>
            <person name="Squares S."/>
            <person name="Stevens K."/>
            <person name="Taylor K."/>
            <person name="Taylor R.G."/>
            <person name="Tivey A."/>
            <person name="Walsh S.V."/>
            <person name="Warren T."/>
            <person name="Whitehead S."/>
            <person name="Woodward J.R."/>
            <person name="Volckaert G."/>
            <person name="Aert R."/>
            <person name="Robben J."/>
            <person name="Grymonprez B."/>
            <person name="Weltjens I."/>
            <person name="Vanstreels E."/>
            <person name="Rieger M."/>
            <person name="Schaefer M."/>
            <person name="Mueller-Auer S."/>
            <person name="Gabel C."/>
            <person name="Fuchs M."/>
            <person name="Duesterhoeft A."/>
            <person name="Fritzc C."/>
            <person name="Holzer E."/>
            <person name="Moestl D."/>
            <person name="Hilbert H."/>
            <person name="Borzym K."/>
            <person name="Langer I."/>
            <person name="Beck A."/>
            <person name="Lehrach H."/>
            <person name="Reinhardt R."/>
            <person name="Pohl T.M."/>
            <person name="Eger P."/>
            <person name="Zimmermann W."/>
            <person name="Wedler H."/>
            <person name="Wambutt R."/>
            <person name="Purnelle B."/>
            <person name="Goffeau A."/>
            <person name="Cadieu E."/>
            <person name="Dreano S."/>
            <person name="Gloux S."/>
            <person name="Lelaure V."/>
            <person name="Mottier S."/>
            <person name="Galibert F."/>
            <person name="Aves S.J."/>
            <person name="Xiang Z."/>
            <person name="Hunt C."/>
            <person name="Moore K."/>
            <person name="Hurst S.M."/>
            <person name="Lucas M."/>
            <person name="Rochet M."/>
            <person name="Gaillardin C."/>
            <person name="Tallada V.A."/>
            <person name="Garzon A."/>
            <person name="Thode G."/>
            <person name="Daga R.R."/>
            <person name="Cruzado L."/>
            <person name="Jimenez J."/>
            <person name="Sanchez M."/>
            <person name="del Rey F."/>
            <person name="Benito J."/>
            <person name="Dominguez A."/>
            <person name="Revuelta J.L."/>
            <person name="Moreno S."/>
            <person name="Armstrong J."/>
            <person name="Forsburg S.L."/>
            <person name="Cerutti L."/>
            <person name="Lowe T."/>
            <person name="McCombie W.R."/>
            <person name="Paulsen I."/>
            <person name="Potashkin J."/>
            <person name="Shpakovski G.V."/>
            <person name="Ussery D."/>
            <person name="Barrell B.G."/>
            <person name="Nurse P."/>
        </authorList>
    </citation>
    <scope>NUCLEOTIDE SEQUENCE [LARGE SCALE GENOMIC DNA]</scope>
    <source>
        <strain>972 / ATCC 24843</strain>
    </source>
</reference>
<reference key="2">
    <citation type="journal article" date="2000" name="Genes Cells">
        <title>Large-scale screening of intracellular protein localization in living fission yeast cells by the use of a GFP-fusion genomic DNA library.</title>
        <authorList>
            <person name="Ding D.-Q."/>
            <person name="Tomita Y."/>
            <person name="Yamamoto A."/>
            <person name="Chikashige Y."/>
            <person name="Haraguchi T."/>
            <person name="Hiraoka Y."/>
        </authorList>
    </citation>
    <scope>NUCLEOTIDE SEQUENCE [LARGE SCALE GENOMIC DNA] OF 264-443</scope>
    <scope>SUBCELLULAR LOCATION</scope>
    <source>
        <strain>ATCC 38364 / 968</strain>
    </source>
</reference>
<reference key="3">
    <citation type="journal article" date="2008" name="J. Proteome Res.">
        <title>Phosphoproteome analysis of fission yeast.</title>
        <authorList>
            <person name="Wilson-Grady J.T."/>
            <person name="Villen J."/>
            <person name="Gygi S.P."/>
        </authorList>
    </citation>
    <scope>PHOSPHORYLATION [LARGE SCALE ANALYSIS] AT SER-712</scope>
    <scope>IDENTIFICATION BY MASS SPECTROMETRY</scope>
</reference>
<gene>
    <name type="ORF">SPBC582.10c</name>
</gene>
<feature type="chain" id="PRO_0000074382" description="Uncharacterized ATP-dependent helicase C582.10c">
    <location>
        <begin position="1"/>
        <end position="830"/>
    </location>
</feature>
<feature type="domain" description="Helicase ATP-binding" evidence="1">
    <location>
        <begin position="249"/>
        <end position="433"/>
    </location>
</feature>
<feature type="domain" description="Helicase C-terminal" evidence="2">
    <location>
        <begin position="662"/>
        <end position="816"/>
    </location>
</feature>
<feature type="region of interest" description="Disordered" evidence="3">
    <location>
        <begin position="1"/>
        <end position="61"/>
    </location>
</feature>
<feature type="short sequence motif" description="DEAH box">
    <location>
        <begin position="384"/>
        <end position="387"/>
    </location>
</feature>
<feature type="compositionally biased region" description="Basic and acidic residues" evidence="3">
    <location>
        <begin position="1"/>
        <end position="12"/>
    </location>
</feature>
<feature type="compositionally biased region" description="Polar residues" evidence="3">
    <location>
        <begin position="15"/>
        <end position="25"/>
    </location>
</feature>
<feature type="binding site" evidence="1">
    <location>
        <begin position="262"/>
        <end position="269"/>
    </location>
    <ligand>
        <name>ATP</name>
        <dbReference type="ChEBI" id="CHEBI:30616"/>
    </ligand>
</feature>
<feature type="modified residue" description="Phosphoserine" evidence="5">
    <location>
        <position position="712"/>
    </location>
</feature>
<keyword id="KW-0067">ATP-binding</keyword>
<keyword id="KW-0238">DNA-binding</keyword>
<keyword id="KW-0347">Helicase</keyword>
<keyword id="KW-0378">Hydrolase</keyword>
<keyword id="KW-0547">Nucleotide-binding</keyword>
<keyword id="KW-0539">Nucleus</keyword>
<keyword id="KW-0597">Phosphoprotein</keyword>
<keyword id="KW-1185">Reference proteome</keyword>
<name>YBMA_SCHPO</name>
<sequence>MEKASKNKESGVKKANNSFLQNFGVNTAGKENESTSLPRLPKSEDESIPKQSIKSKNKKKTQHFLSDAFESLKRQEIDTNEKEVIVSAPITSKPAQVFYSKKLERKDEGIRKWEKDPFAPISVKSGAWKKPYTKVPEVSINKATSKRTDLINDKPIVIPIPRASTSTLYFGKHNKPTSENRKGPIGIPTEEILTSQNTQAMLHKLFENNVLDNVKDDSMQRQSSFIPGMHIRLLDHQVQGLTWLKSRETVSKSSASGGILADDMGLGKTIQMIALILSHPLPKKKHSIKSTLVVAPLSLIKQWESEVQTKSKLTAIVYHGASRYKLLKVIHEYDVVITTYQILVSEWVSHNTTGTDGKSPTEAKSYEKKKPSLFAFYWWRIILDEAHTIKNKSSKSALACCALQGINRWCLTGTPLQNNVDELYSLVKFLHINPFNDQSVWKDQISLPLCQGEENLVFKRLRMLLSVIMLRRTKTLLEANAGKDGTGGALKLSKRLVYKVICKFEESERDFYSNLARNMERTMSNFVNSGKLGKNYTNILCLLLRLRQACNHPQSLNFQFEQDVDAFNALDGAANTNKLASDQDVDDLANLLETVEIGSRKKSFCTICMAELPPDFHEKKCKDCSRNFKELDKGIQDPNDKTLYKSSKIREILKILSLDEQEEDDTVRGLRKTIIFSQFTTFLDIIDLHLRKAGIGFVRYDGRMNNRAREKSLDLLRSDSGTQVLLCSLKCGALGLNLTCASRVILCDVWWNPAIEEQAIDRVHRIGQRRDVLVYKLVVENTIEEKIVELQNLKRDLAKQALGDGKKSVFTSKKLTLNDLLFLFNKRAAA</sequence>
<accession>Q10332</accession>
<proteinExistence type="evidence at protein level"/>
<evidence type="ECO:0000255" key="1">
    <source>
        <dbReference type="PROSITE-ProRule" id="PRU00541"/>
    </source>
</evidence>
<evidence type="ECO:0000255" key="2">
    <source>
        <dbReference type="PROSITE-ProRule" id="PRU00542"/>
    </source>
</evidence>
<evidence type="ECO:0000256" key="3">
    <source>
        <dbReference type="SAM" id="MobiDB-lite"/>
    </source>
</evidence>
<evidence type="ECO:0000269" key="4">
    <source>
    </source>
</evidence>
<evidence type="ECO:0000269" key="5">
    <source>
    </source>
</evidence>
<evidence type="ECO:0000305" key="6"/>
<dbReference type="EC" id="3.6.4.-"/>
<dbReference type="EMBL" id="CU329671">
    <property type="protein sequence ID" value="CAB46673.1"/>
    <property type="molecule type" value="Genomic_DNA"/>
</dbReference>
<dbReference type="EMBL" id="AB027965">
    <property type="protein sequence ID" value="BAA87269.1"/>
    <property type="molecule type" value="Genomic_DNA"/>
</dbReference>
<dbReference type="PIR" id="T37973">
    <property type="entry name" value="T37973"/>
</dbReference>
<dbReference type="SMR" id="Q10332"/>
<dbReference type="BioGRID" id="277423">
    <property type="interactions" value="18"/>
</dbReference>
<dbReference type="FunCoup" id="Q10332">
    <property type="interactions" value="221"/>
</dbReference>
<dbReference type="STRING" id="284812.Q10332"/>
<dbReference type="iPTMnet" id="Q10332"/>
<dbReference type="PaxDb" id="4896-SPBC582.10c.1"/>
<dbReference type="EnsemblFungi" id="SPBC582.10c.1">
    <property type="protein sequence ID" value="SPBC582.10c.1:pep"/>
    <property type="gene ID" value="SPBC582.10c"/>
</dbReference>
<dbReference type="KEGG" id="spo:2540907"/>
<dbReference type="PomBase" id="SPBC582.10c"/>
<dbReference type="VEuPathDB" id="FungiDB:SPBC582.10c"/>
<dbReference type="eggNOG" id="KOG1001">
    <property type="taxonomic scope" value="Eukaryota"/>
</dbReference>
<dbReference type="HOGENOM" id="CLU_000315_2_8_1"/>
<dbReference type="InParanoid" id="Q10332"/>
<dbReference type="OMA" id="QSCNHPD"/>
<dbReference type="PhylomeDB" id="Q10332"/>
<dbReference type="PRO" id="PR:Q10332"/>
<dbReference type="Proteomes" id="UP000002485">
    <property type="component" value="Chromosome II"/>
</dbReference>
<dbReference type="GO" id="GO:0005737">
    <property type="term" value="C:cytoplasm"/>
    <property type="evidence" value="ECO:0007005"/>
    <property type="project" value="PomBase"/>
</dbReference>
<dbReference type="GO" id="GO:0005829">
    <property type="term" value="C:cytosol"/>
    <property type="evidence" value="ECO:0007005"/>
    <property type="project" value="PomBase"/>
</dbReference>
<dbReference type="GO" id="GO:0000113">
    <property type="term" value="C:nucleotide-excision repair factor 4 complex"/>
    <property type="evidence" value="ECO:0000266"/>
    <property type="project" value="PomBase"/>
</dbReference>
<dbReference type="GO" id="GO:0005634">
    <property type="term" value="C:nucleus"/>
    <property type="evidence" value="ECO:0000318"/>
    <property type="project" value="GO_Central"/>
</dbReference>
<dbReference type="GO" id="GO:0005524">
    <property type="term" value="F:ATP binding"/>
    <property type="evidence" value="ECO:0007669"/>
    <property type="project" value="UniProtKB-KW"/>
</dbReference>
<dbReference type="GO" id="GO:0016887">
    <property type="term" value="F:ATP hydrolysis activity"/>
    <property type="evidence" value="ECO:0000305"/>
    <property type="project" value="PomBase"/>
</dbReference>
<dbReference type="GO" id="GO:0008094">
    <property type="term" value="F:ATP-dependent activity, acting on DNA"/>
    <property type="evidence" value="ECO:0000318"/>
    <property type="project" value="GO_Central"/>
</dbReference>
<dbReference type="GO" id="GO:0003684">
    <property type="term" value="F:damaged DNA binding"/>
    <property type="evidence" value="ECO:0000266"/>
    <property type="project" value="PomBase"/>
</dbReference>
<dbReference type="GO" id="GO:0004386">
    <property type="term" value="F:helicase activity"/>
    <property type="evidence" value="ECO:0007669"/>
    <property type="project" value="UniProtKB-KW"/>
</dbReference>
<dbReference type="GO" id="GO:0006281">
    <property type="term" value="P:DNA repair"/>
    <property type="evidence" value="ECO:0000318"/>
    <property type="project" value="GO_Central"/>
</dbReference>
<dbReference type="GO" id="GO:0006289">
    <property type="term" value="P:nucleotide-excision repair"/>
    <property type="evidence" value="ECO:0000266"/>
    <property type="project" value="PomBase"/>
</dbReference>
<dbReference type="CDD" id="cd18008">
    <property type="entry name" value="DEXDc_SHPRH-like"/>
    <property type="match status" value="1"/>
</dbReference>
<dbReference type="CDD" id="cd18793">
    <property type="entry name" value="SF2_C_SNF"/>
    <property type="match status" value="1"/>
</dbReference>
<dbReference type="Gene3D" id="3.40.50.300">
    <property type="entry name" value="P-loop containing nucleotide triphosphate hydrolases"/>
    <property type="match status" value="1"/>
</dbReference>
<dbReference type="Gene3D" id="3.40.50.10810">
    <property type="entry name" value="Tandem AAA-ATPase domain"/>
    <property type="match status" value="1"/>
</dbReference>
<dbReference type="InterPro" id="IPR014001">
    <property type="entry name" value="Helicase_ATP-bd"/>
</dbReference>
<dbReference type="InterPro" id="IPR001650">
    <property type="entry name" value="Helicase_C-like"/>
</dbReference>
<dbReference type="InterPro" id="IPR027417">
    <property type="entry name" value="P-loop_NTPase"/>
</dbReference>
<dbReference type="InterPro" id="IPR038718">
    <property type="entry name" value="SNF2-like_sf"/>
</dbReference>
<dbReference type="InterPro" id="IPR049730">
    <property type="entry name" value="SNF2/RAD54-like_C"/>
</dbReference>
<dbReference type="InterPro" id="IPR000330">
    <property type="entry name" value="SNF2_N"/>
</dbReference>
<dbReference type="InterPro" id="IPR050628">
    <property type="entry name" value="SNF2_RAD54_helicase_TF"/>
</dbReference>
<dbReference type="PANTHER" id="PTHR45626:SF14">
    <property type="entry name" value="ATP-DEPENDENT DNA HELICASE (EUROFUNG)"/>
    <property type="match status" value="1"/>
</dbReference>
<dbReference type="PANTHER" id="PTHR45626">
    <property type="entry name" value="TRANSCRIPTION TERMINATION FACTOR 2-RELATED"/>
    <property type="match status" value="1"/>
</dbReference>
<dbReference type="Pfam" id="PF00271">
    <property type="entry name" value="Helicase_C"/>
    <property type="match status" value="1"/>
</dbReference>
<dbReference type="Pfam" id="PF00176">
    <property type="entry name" value="SNF2-rel_dom"/>
    <property type="match status" value="1"/>
</dbReference>
<dbReference type="SMART" id="SM00487">
    <property type="entry name" value="DEXDc"/>
    <property type="match status" value="1"/>
</dbReference>
<dbReference type="SMART" id="SM00490">
    <property type="entry name" value="HELICc"/>
    <property type="match status" value="1"/>
</dbReference>
<dbReference type="SUPFAM" id="SSF52540">
    <property type="entry name" value="P-loop containing nucleoside triphosphate hydrolases"/>
    <property type="match status" value="2"/>
</dbReference>
<dbReference type="PROSITE" id="PS51192">
    <property type="entry name" value="HELICASE_ATP_BIND_1"/>
    <property type="match status" value="1"/>
</dbReference>
<dbReference type="PROSITE" id="PS51194">
    <property type="entry name" value="HELICASE_CTER"/>
    <property type="match status" value="1"/>
</dbReference>
<comment type="subcellular location">
    <subcellularLocation>
        <location evidence="4">Nucleus</location>
    </subcellularLocation>
</comment>
<comment type="similarity">
    <text evidence="6">Belongs to the SNF2/RAD54 helicase family.</text>
</comment>
<protein>
    <recommendedName>
        <fullName>Uncharacterized ATP-dependent helicase C582.10c</fullName>
        <ecNumber>3.6.4.-</ecNumber>
    </recommendedName>
</protein>
<organism>
    <name type="scientific">Schizosaccharomyces pombe (strain 972 / ATCC 24843)</name>
    <name type="common">Fission yeast</name>
    <dbReference type="NCBI Taxonomy" id="284812"/>
    <lineage>
        <taxon>Eukaryota</taxon>
        <taxon>Fungi</taxon>
        <taxon>Dikarya</taxon>
        <taxon>Ascomycota</taxon>
        <taxon>Taphrinomycotina</taxon>
        <taxon>Schizosaccharomycetes</taxon>
        <taxon>Schizosaccharomycetales</taxon>
        <taxon>Schizosaccharomycetaceae</taxon>
        <taxon>Schizosaccharomyces</taxon>
    </lineage>
</organism>